<reference key="1">
    <citation type="journal article" date="2003" name="Science">
        <title>Genome of Geobacter sulfurreducens: metal reduction in subsurface environments.</title>
        <authorList>
            <person name="Methe B.A."/>
            <person name="Nelson K.E."/>
            <person name="Eisen J.A."/>
            <person name="Paulsen I.T."/>
            <person name="Nelson W.C."/>
            <person name="Heidelberg J.F."/>
            <person name="Wu D."/>
            <person name="Wu M."/>
            <person name="Ward N.L."/>
            <person name="Beanan M.J."/>
            <person name="Dodson R.J."/>
            <person name="Madupu R."/>
            <person name="Brinkac L.M."/>
            <person name="Daugherty S.C."/>
            <person name="DeBoy R.T."/>
            <person name="Durkin A.S."/>
            <person name="Gwinn M.L."/>
            <person name="Kolonay J.F."/>
            <person name="Sullivan S.A."/>
            <person name="Haft D.H."/>
            <person name="Selengut J."/>
            <person name="Davidsen T.M."/>
            <person name="Zafar N."/>
            <person name="White O."/>
            <person name="Tran B."/>
            <person name="Romero C."/>
            <person name="Forberger H.A."/>
            <person name="Weidman J.F."/>
            <person name="Khouri H.M."/>
            <person name="Feldblyum T.V."/>
            <person name="Utterback T.R."/>
            <person name="Van Aken S.E."/>
            <person name="Lovley D.R."/>
            <person name="Fraser C.M."/>
        </authorList>
    </citation>
    <scope>NUCLEOTIDE SEQUENCE [LARGE SCALE GENOMIC DNA]</scope>
    <source>
        <strain>ATCC 51573 / DSM 12127 / PCA</strain>
    </source>
</reference>
<organism>
    <name type="scientific">Geobacter sulfurreducens (strain ATCC 51573 / DSM 12127 / PCA)</name>
    <dbReference type="NCBI Taxonomy" id="243231"/>
    <lineage>
        <taxon>Bacteria</taxon>
        <taxon>Pseudomonadati</taxon>
        <taxon>Thermodesulfobacteriota</taxon>
        <taxon>Desulfuromonadia</taxon>
        <taxon>Geobacterales</taxon>
        <taxon>Geobacteraceae</taxon>
        <taxon>Geobacter</taxon>
    </lineage>
</organism>
<comment type="function">
    <text evidence="1">Catalyzes the ATP-dependent 2-thiolation of cytidine in position 32 of tRNA, to form 2-thiocytidine (s(2)C32). The sulfur atoms are provided by the cysteine/cysteine desulfurase (IscS) system.</text>
</comment>
<comment type="catalytic activity">
    <reaction evidence="1">
        <text>cytidine(32) in tRNA + S-sulfanyl-L-cysteinyl-[cysteine desulfurase] + AH2 + ATP = 2-thiocytidine(32) in tRNA + L-cysteinyl-[cysteine desulfurase] + A + AMP + diphosphate + H(+)</text>
        <dbReference type="Rhea" id="RHEA:57048"/>
        <dbReference type="Rhea" id="RHEA-COMP:10288"/>
        <dbReference type="Rhea" id="RHEA-COMP:12157"/>
        <dbReference type="Rhea" id="RHEA-COMP:12158"/>
        <dbReference type="Rhea" id="RHEA-COMP:14821"/>
        <dbReference type="ChEBI" id="CHEBI:13193"/>
        <dbReference type="ChEBI" id="CHEBI:15378"/>
        <dbReference type="ChEBI" id="CHEBI:17499"/>
        <dbReference type="ChEBI" id="CHEBI:29950"/>
        <dbReference type="ChEBI" id="CHEBI:30616"/>
        <dbReference type="ChEBI" id="CHEBI:33019"/>
        <dbReference type="ChEBI" id="CHEBI:61963"/>
        <dbReference type="ChEBI" id="CHEBI:82748"/>
        <dbReference type="ChEBI" id="CHEBI:141453"/>
        <dbReference type="ChEBI" id="CHEBI:456215"/>
    </reaction>
    <physiologicalReaction direction="left-to-right" evidence="1">
        <dbReference type="Rhea" id="RHEA:57049"/>
    </physiologicalReaction>
</comment>
<comment type="cofactor">
    <cofactor evidence="1">
        <name>Mg(2+)</name>
        <dbReference type="ChEBI" id="CHEBI:18420"/>
    </cofactor>
</comment>
<comment type="cofactor">
    <cofactor evidence="1">
        <name>[4Fe-4S] cluster</name>
        <dbReference type="ChEBI" id="CHEBI:49883"/>
    </cofactor>
    <text evidence="1">Binds 1 [4Fe-4S] cluster per subunit. The cluster is chelated by three Cys residues, the fourth Fe has a free coordination site that may bind a sulfur atom transferred from the persulfide of IscS.</text>
</comment>
<comment type="pathway">
    <text evidence="1">tRNA modification.</text>
</comment>
<comment type="subunit">
    <text evidence="1">Homodimer.</text>
</comment>
<comment type="subcellular location">
    <subcellularLocation>
        <location evidence="1">Cytoplasm</location>
    </subcellularLocation>
</comment>
<comment type="miscellaneous">
    <text evidence="1">The thiolation reaction likely consists of two steps: a first activation step by ATP to form an adenylated intermediate of the target base of tRNA, and a second nucleophilic substitution step of the sulfur (S) atom supplied by the hydrosulfide attached to the Fe-S cluster.</text>
</comment>
<comment type="similarity">
    <text evidence="1">Belongs to the TtcA family.</text>
</comment>
<feature type="chain" id="PRO_0000348745" description="tRNA-cytidine(32) 2-sulfurtransferase">
    <location>
        <begin position="1"/>
        <end position="257"/>
    </location>
</feature>
<feature type="short sequence motif" description="PP-loop motif" evidence="1">
    <location>
        <begin position="37"/>
        <end position="42"/>
    </location>
</feature>
<feature type="binding site" evidence="1">
    <location>
        <position position="112"/>
    </location>
    <ligand>
        <name>[4Fe-4S] cluster</name>
        <dbReference type="ChEBI" id="CHEBI:49883"/>
    </ligand>
</feature>
<feature type="binding site" evidence="1">
    <location>
        <position position="115"/>
    </location>
    <ligand>
        <name>[4Fe-4S] cluster</name>
        <dbReference type="ChEBI" id="CHEBI:49883"/>
    </ligand>
</feature>
<feature type="binding site" evidence="1">
    <location>
        <position position="202"/>
    </location>
    <ligand>
        <name>[4Fe-4S] cluster</name>
        <dbReference type="ChEBI" id="CHEBI:49883"/>
    </ligand>
</feature>
<accession>Q74GW7</accession>
<evidence type="ECO:0000255" key="1">
    <source>
        <dbReference type="HAMAP-Rule" id="MF_01850"/>
    </source>
</evidence>
<protein>
    <recommendedName>
        <fullName evidence="1">tRNA-cytidine(32) 2-sulfurtransferase</fullName>
        <ecNumber evidence="1">2.8.1.-</ecNumber>
    </recommendedName>
    <alternativeName>
        <fullName evidence="1">Two-thiocytidine biosynthesis protein A</fullName>
    </alternativeName>
    <alternativeName>
        <fullName evidence="1">tRNA 2-thiocytidine biosynthesis protein TtcA</fullName>
    </alternativeName>
</protein>
<keyword id="KW-0004">4Fe-4S</keyword>
<keyword id="KW-0067">ATP-binding</keyword>
<keyword id="KW-0963">Cytoplasm</keyword>
<keyword id="KW-0408">Iron</keyword>
<keyword id="KW-0411">Iron-sulfur</keyword>
<keyword id="KW-0460">Magnesium</keyword>
<keyword id="KW-0479">Metal-binding</keyword>
<keyword id="KW-0547">Nucleotide-binding</keyword>
<keyword id="KW-1185">Reference proteome</keyword>
<keyword id="KW-0694">RNA-binding</keyword>
<keyword id="KW-0808">Transferase</keyword>
<keyword id="KW-0819">tRNA processing</keyword>
<keyword id="KW-0820">tRNA-binding</keyword>
<dbReference type="EC" id="2.8.1.-" evidence="1"/>
<dbReference type="EMBL" id="AE017180">
    <property type="protein sequence ID" value="AAR33462.2"/>
    <property type="molecule type" value="Genomic_DNA"/>
</dbReference>
<dbReference type="RefSeq" id="NP_951189.2">
    <property type="nucleotide sequence ID" value="NC_002939.5"/>
</dbReference>
<dbReference type="RefSeq" id="WP_010940803.1">
    <property type="nucleotide sequence ID" value="NC_002939.5"/>
</dbReference>
<dbReference type="SMR" id="Q74GW7"/>
<dbReference type="FunCoup" id="Q74GW7">
    <property type="interactions" value="365"/>
</dbReference>
<dbReference type="STRING" id="243231.GSU0127"/>
<dbReference type="EnsemblBacteria" id="AAR33462">
    <property type="protein sequence ID" value="AAR33462"/>
    <property type="gene ID" value="GSU0127"/>
</dbReference>
<dbReference type="KEGG" id="gsu:GSU0127"/>
<dbReference type="PATRIC" id="fig|243231.5.peg.127"/>
<dbReference type="eggNOG" id="COG0037">
    <property type="taxonomic scope" value="Bacteria"/>
</dbReference>
<dbReference type="HOGENOM" id="CLU_026481_0_0_7"/>
<dbReference type="InParanoid" id="Q74GW7"/>
<dbReference type="OrthoDB" id="9801054at2"/>
<dbReference type="Proteomes" id="UP000000577">
    <property type="component" value="Chromosome"/>
</dbReference>
<dbReference type="GO" id="GO:0005829">
    <property type="term" value="C:cytosol"/>
    <property type="evidence" value="ECO:0000318"/>
    <property type="project" value="GO_Central"/>
</dbReference>
<dbReference type="GO" id="GO:0051539">
    <property type="term" value="F:4 iron, 4 sulfur cluster binding"/>
    <property type="evidence" value="ECO:0007669"/>
    <property type="project" value="UniProtKB-KW"/>
</dbReference>
<dbReference type="GO" id="GO:0005524">
    <property type="term" value="F:ATP binding"/>
    <property type="evidence" value="ECO:0007669"/>
    <property type="project" value="UniProtKB-KW"/>
</dbReference>
<dbReference type="GO" id="GO:0046872">
    <property type="term" value="F:metal ion binding"/>
    <property type="evidence" value="ECO:0007669"/>
    <property type="project" value="UniProtKB-KW"/>
</dbReference>
<dbReference type="GO" id="GO:0016783">
    <property type="term" value="F:sulfurtransferase activity"/>
    <property type="evidence" value="ECO:0000318"/>
    <property type="project" value="GO_Central"/>
</dbReference>
<dbReference type="GO" id="GO:0000049">
    <property type="term" value="F:tRNA binding"/>
    <property type="evidence" value="ECO:0007669"/>
    <property type="project" value="UniProtKB-KW"/>
</dbReference>
<dbReference type="GO" id="GO:0034227">
    <property type="term" value="P:tRNA thio-modification"/>
    <property type="evidence" value="ECO:0000318"/>
    <property type="project" value="GO_Central"/>
</dbReference>
<dbReference type="CDD" id="cd24138">
    <property type="entry name" value="TtcA-like"/>
    <property type="match status" value="1"/>
</dbReference>
<dbReference type="Gene3D" id="3.40.50.620">
    <property type="entry name" value="HUPs"/>
    <property type="match status" value="1"/>
</dbReference>
<dbReference type="HAMAP" id="MF_01850">
    <property type="entry name" value="TtcA"/>
    <property type="match status" value="1"/>
</dbReference>
<dbReference type="InterPro" id="IPR014729">
    <property type="entry name" value="Rossmann-like_a/b/a_fold"/>
</dbReference>
<dbReference type="InterPro" id="IPR011063">
    <property type="entry name" value="TilS/TtcA_N"/>
</dbReference>
<dbReference type="InterPro" id="IPR012089">
    <property type="entry name" value="tRNA_Cyd_32_2_STrfase"/>
</dbReference>
<dbReference type="InterPro" id="IPR035107">
    <property type="entry name" value="tRNA_thiolation_TtcA_Ctu1"/>
</dbReference>
<dbReference type="NCBIfam" id="NF007972">
    <property type="entry name" value="PRK10696.1"/>
    <property type="match status" value="1"/>
</dbReference>
<dbReference type="PANTHER" id="PTHR43686:SF1">
    <property type="entry name" value="AMINOTRAN_5 DOMAIN-CONTAINING PROTEIN"/>
    <property type="match status" value="1"/>
</dbReference>
<dbReference type="PANTHER" id="PTHR43686">
    <property type="entry name" value="SULFURTRANSFERASE-RELATED"/>
    <property type="match status" value="1"/>
</dbReference>
<dbReference type="Pfam" id="PF01171">
    <property type="entry name" value="ATP_bind_3"/>
    <property type="match status" value="1"/>
</dbReference>
<dbReference type="PIRSF" id="PIRSF004976">
    <property type="entry name" value="ATPase_YdaO"/>
    <property type="match status" value="1"/>
</dbReference>
<dbReference type="SUPFAM" id="SSF52402">
    <property type="entry name" value="Adenine nucleotide alpha hydrolases-like"/>
    <property type="match status" value="1"/>
</dbReference>
<sequence>MEFIDNIRYKKIKNAVGRAVADFGLIRDGDRIAVAVSGGKDSYTLLHILEGLRRRAPVKYELVAVTIDSGYPGFRSDVIASYLREQGFAHHLETTDHYDIIREKRRPGSSYCSICARLKRGVLYTLAQKLGCNKLALGHHLDDFVETLLLNQFFVGTLKAMAPRMLADNGETTVIRPLVYVEEREIIPFARENRFPVVCCSCPVCGTADLQRRRMKKLLTELEKENPAVKRSLLRALGNVQPRYLLDLELQRLCDVP</sequence>
<gene>
    <name evidence="1" type="primary">ttcA</name>
    <name type="ordered locus">GSU0127</name>
</gene>
<proteinExistence type="inferred from homology"/>
<name>TTCA_GEOSL</name>